<keyword id="KW-0963">Cytoplasm</keyword>
<keyword id="KW-0210">Decarboxylase</keyword>
<keyword id="KW-0456">Lyase</keyword>
<keyword id="KW-0627">Porphyrin biosynthesis</keyword>
<comment type="function">
    <text evidence="1">Catalyzes the decarboxylation of four acetate groups of uroporphyrinogen-III to yield coproporphyrinogen-III.</text>
</comment>
<comment type="catalytic activity">
    <reaction evidence="1">
        <text>uroporphyrinogen III + 4 H(+) = coproporphyrinogen III + 4 CO2</text>
        <dbReference type="Rhea" id="RHEA:19865"/>
        <dbReference type="ChEBI" id="CHEBI:15378"/>
        <dbReference type="ChEBI" id="CHEBI:16526"/>
        <dbReference type="ChEBI" id="CHEBI:57308"/>
        <dbReference type="ChEBI" id="CHEBI:57309"/>
        <dbReference type="EC" id="4.1.1.37"/>
    </reaction>
</comment>
<comment type="pathway">
    <text evidence="1">Porphyrin-containing compound metabolism; protoporphyrin-IX biosynthesis; coproporphyrinogen-III from 5-aminolevulinate: step 4/4.</text>
</comment>
<comment type="subunit">
    <text evidence="1">Homodimer.</text>
</comment>
<comment type="subcellular location">
    <subcellularLocation>
        <location evidence="1">Cytoplasm</location>
    </subcellularLocation>
</comment>
<comment type="similarity">
    <text evidence="1">Belongs to the uroporphyrinogen decarboxylase family.</text>
</comment>
<protein>
    <recommendedName>
        <fullName evidence="1">Uroporphyrinogen decarboxylase</fullName>
        <shortName evidence="1">UPD</shortName>
        <shortName evidence="1">URO-D</shortName>
        <ecNumber evidence="1">4.1.1.37</ecNumber>
    </recommendedName>
</protein>
<organism>
    <name type="scientific">Escherichia coli O9:H4 (strain HS)</name>
    <dbReference type="NCBI Taxonomy" id="331112"/>
    <lineage>
        <taxon>Bacteria</taxon>
        <taxon>Pseudomonadati</taxon>
        <taxon>Pseudomonadota</taxon>
        <taxon>Gammaproteobacteria</taxon>
        <taxon>Enterobacterales</taxon>
        <taxon>Enterobacteriaceae</taxon>
        <taxon>Escherichia</taxon>
    </lineage>
</organism>
<accession>A8A797</accession>
<dbReference type="EC" id="4.1.1.37" evidence="1"/>
<dbReference type="EMBL" id="CP000802">
    <property type="protein sequence ID" value="ABV08401.1"/>
    <property type="molecule type" value="Genomic_DNA"/>
</dbReference>
<dbReference type="RefSeq" id="WP_000137657.1">
    <property type="nucleotide sequence ID" value="NC_009800.1"/>
</dbReference>
<dbReference type="SMR" id="A8A797"/>
<dbReference type="GeneID" id="93777897"/>
<dbReference type="KEGG" id="ecx:EcHS_A4231"/>
<dbReference type="HOGENOM" id="CLU_040933_0_0_6"/>
<dbReference type="UniPathway" id="UPA00251">
    <property type="reaction ID" value="UER00321"/>
</dbReference>
<dbReference type="GO" id="GO:0005829">
    <property type="term" value="C:cytosol"/>
    <property type="evidence" value="ECO:0007669"/>
    <property type="project" value="TreeGrafter"/>
</dbReference>
<dbReference type="GO" id="GO:0004853">
    <property type="term" value="F:uroporphyrinogen decarboxylase activity"/>
    <property type="evidence" value="ECO:0007669"/>
    <property type="project" value="UniProtKB-UniRule"/>
</dbReference>
<dbReference type="GO" id="GO:0019353">
    <property type="term" value="P:protoporphyrinogen IX biosynthetic process from glutamate"/>
    <property type="evidence" value="ECO:0007669"/>
    <property type="project" value="TreeGrafter"/>
</dbReference>
<dbReference type="CDD" id="cd00717">
    <property type="entry name" value="URO-D"/>
    <property type="match status" value="1"/>
</dbReference>
<dbReference type="FunFam" id="3.20.20.210:FF:000001">
    <property type="entry name" value="Uroporphyrinogen decarboxylase"/>
    <property type="match status" value="1"/>
</dbReference>
<dbReference type="Gene3D" id="3.20.20.210">
    <property type="match status" value="1"/>
</dbReference>
<dbReference type="HAMAP" id="MF_00218">
    <property type="entry name" value="URO_D"/>
    <property type="match status" value="1"/>
</dbReference>
<dbReference type="InterPro" id="IPR038071">
    <property type="entry name" value="UROD/MetE-like_sf"/>
</dbReference>
<dbReference type="InterPro" id="IPR006361">
    <property type="entry name" value="Uroporphyrinogen_deCO2ase_HemE"/>
</dbReference>
<dbReference type="InterPro" id="IPR000257">
    <property type="entry name" value="Uroporphyrinogen_deCOase"/>
</dbReference>
<dbReference type="NCBIfam" id="TIGR01464">
    <property type="entry name" value="hemE"/>
    <property type="match status" value="1"/>
</dbReference>
<dbReference type="PANTHER" id="PTHR21091">
    <property type="entry name" value="METHYLTETRAHYDROFOLATE:HOMOCYSTEINE METHYLTRANSFERASE RELATED"/>
    <property type="match status" value="1"/>
</dbReference>
<dbReference type="PANTHER" id="PTHR21091:SF169">
    <property type="entry name" value="UROPORPHYRINOGEN DECARBOXYLASE"/>
    <property type="match status" value="1"/>
</dbReference>
<dbReference type="Pfam" id="PF01208">
    <property type="entry name" value="URO-D"/>
    <property type="match status" value="1"/>
</dbReference>
<dbReference type="SUPFAM" id="SSF51726">
    <property type="entry name" value="UROD/MetE-like"/>
    <property type="match status" value="1"/>
</dbReference>
<dbReference type="PROSITE" id="PS00906">
    <property type="entry name" value="UROD_1"/>
    <property type="match status" value="1"/>
</dbReference>
<dbReference type="PROSITE" id="PS00907">
    <property type="entry name" value="UROD_2"/>
    <property type="match status" value="1"/>
</dbReference>
<proteinExistence type="inferred from homology"/>
<sequence>MTELKNDRYLRALLRQPVDVTPVWMMRQAGRYLPEYKATRAQAGDFMSLCKNAELACEVTLQPLRRYPLDAAILFSDILTVPDAMGLGLYFEAGEGPRFTSPVTCKADVDKLPIPDPEDELGYVMNAVRTIRRELKGEVPLIGFSGSPWTLATYMVEGGSSKAFTVIKKMMYADPQALHALLDKLAKSVTLYLNAQIKAGAQAVMIFDTWGGVLTGRDYQQFSLYYMHKIVDGLLRENDGRRVPVTLFTKGGGQWLEAMAETGCDALGLDWTTDIADARRRVGNKVALQGNMDPSMLYAPPARIEEEVATILAGFGHGEGHVFNLGHGIHQDVPPEHAGVFVEAVHRLSEQYHR</sequence>
<feature type="chain" id="PRO_1000058639" description="Uroporphyrinogen decarboxylase">
    <location>
        <begin position="1"/>
        <end position="354"/>
    </location>
</feature>
<feature type="binding site" evidence="1">
    <location>
        <begin position="27"/>
        <end position="31"/>
    </location>
    <ligand>
        <name>substrate</name>
    </ligand>
</feature>
<feature type="binding site" evidence="1">
    <location>
        <position position="77"/>
    </location>
    <ligand>
        <name>substrate</name>
    </ligand>
</feature>
<feature type="binding site" evidence="1">
    <location>
        <position position="154"/>
    </location>
    <ligand>
        <name>substrate</name>
    </ligand>
</feature>
<feature type="binding site" evidence="1">
    <location>
        <position position="209"/>
    </location>
    <ligand>
        <name>substrate</name>
    </ligand>
</feature>
<feature type="binding site" evidence="1">
    <location>
        <position position="327"/>
    </location>
    <ligand>
        <name>substrate</name>
    </ligand>
</feature>
<feature type="site" description="Transition state stabilizer" evidence="1">
    <location>
        <position position="77"/>
    </location>
</feature>
<evidence type="ECO:0000255" key="1">
    <source>
        <dbReference type="HAMAP-Rule" id="MF_00218"/>
    </source>
</evidence>
<name>DCUP_ECOHS</name>
<reference key="1">
    <citation type="journal article" date="2008" name="J. Bacteriol.">
        <title>The pangenome structure of Escherichia coli: comparative genomic analysis of E. coli commensal and pathogenic isolates.</title>
        <authorList>
            <person name="Rasko D.A."/>
            <person name="Rosovitz M.J."/>
            <person name="Myers G.S.A."/>
            <person name="Mongodin E.F."/>
            <person name="Fricke W.F."/>
            <person name="Gajer P."/>
            <person name="Crabtree J."/>
            <person name="Sebaihia M."/>
            <person name="Thomson N.R."/>
            <person name="Chaudhuri R."/>
            <person name="Henderson I.R."/>
            <person name="Sperandio V."/>
            <person name="Ravel J."/>
        </authorList>
    </citation>
    <scope>NUCLEOTIDE SEQUENCE [LARGE SCALE GENOMIC DNA]</scope>
    <source>
        <strain>HS</strain>
    </source>
</reference>
<gene>
    <name evidence="1" type="primary">hemE</name>
    <name type="ordered locus">EcHS_A4231</name>
</gene>